<proteinExistence type="inferred from homology"/>
<name>IRGA_VIBCH</name>
<organism>
    <name type="scientific">Vibrio cholerae serotype O1 (strain ATCC 39315 / El Tor Inaba N16961)</name>
    <dbReference type="NCBI Taxonomy" id="243277"/>
    <lineage>
        <taxon>Bacteria</taxon>
        <taxon>Pseudomonadati</taxon>
        <taxon>Pseudomonadota</taxon>
        <taxon>Gammaproteobacteria</taxon>
        <taxon>Vibrionales</taxon>
        <taxon>Vibrionaceae</taxon>
        <taxon>Vibrio</taxon>
    </lineage>
</organism>
<comment type="function">
    <text evidence="1">Involved in the initial step of iron uptake by binding ferric vibriobactin, an iron chelatin siderophore that allows V.cholerae to extract iron from the environment.</text>
</comment>
<comment type="subcellular location">
    <subcellularLocation>
        <location evidence="3">Cell outer membrane</location>
        <topology evidence="3">Multi-pass membrane protein</topology>
    </subcellularLocation>
</comment>
<comment type="similarity">
    <text evidence="4">Belongs to the TonB-dependent receptor family.</text>
</comment>
<reference key="1">
    <citation type="journal article" date="2000" name="Nature">
        <title>DNA sequence of both chromosomes of the cholera pathogen Vibrio cholerae.</title>
        <authorList>
            <person name="Heidelberg J.F."/>
            <person name="Eisen J.A."/>
            <person name="Nelson W.C."/>
            <person name="Clayton R.A."/>
            <person name="Gwinn M.L."/>
            <person name="Dodson R.J."/>
            <person name="Haft D.H."/>
            <person name="Hickey E.K."/>
            <person name="Peterson J.D."/>
            <person name="Umayam L.A."/>
            <person name="Gill S.R."/>
            <person name="Nelson K.E."/>
            <person name="Read T.D."/>
            <person name="Tettelin H."/>
            <person name="Richardson D.L."/>
            <person name="Ermolaeva M.D."/>
            <person name="Vamathevan J.J."/>
            <person name="Bass S."/>
            <person name="Qin H."/>
            <person name="Dragoi I."/>
            <person name="Sellers P."/>
            <person name="McDonald L.A."/>
            <person name="Utterback T.R."/>
            <person name="Fleischmann R.D."/>
            <person name="Nierman W.C."/>
            <person name="White O."/>
            <person name="Salzberg S.L."/>
            <person name="Smith H.O."/>
            <person name="Colwell R.R."/>
            <person name="Mekalanos J.J."/>
            <person name="Venter J.C."/>
            <person name="Fraser C.M."/>
        </authorList>
    </citation>
    <scope>NUCLEOTIDE SEQUENCE [LARGE SCALE GENOMIC DNA]</scope>
    <source>
        <strain>ATCC 39315 / El Tor Inaba N16961</strain>
    </source>
</reference>
<gene>
    <name type="primary">irgA</name>
    <name type="ordered locus">VC_0475</name>
</gene>
<protein>
    <recommendedName>
        <fullName>Iron-regulated outer membrane virulence protein</fullName>
    </recommendedName>
</protein>
<dbReference type="EMBL" id="AE003852">
    <property type="protein sequence ID" value="AAF93648.1"/>
    <property type="molecule type" value="Genomic_DNA"/>
</dbReference>
<dbReference type="PIR" id="D82317">
    <property type="entry name" value="D82317"/>
</dbReference>
<dbReference type="RefSeq" id="NP_230129.1">
    <property type="nucleotide sequence ID" value="NC_002505.1"/>
</dbReference>
<dbReference type="RefSeq" id="WP_000086048.1">
    <property type="nucleotide sequence ID" value="NZ_LT906614.1"/>
</dbReference>
<dbReference type="SMR" id="P0C6R0"/>
<dbReference type="STRING" id="243277.VC_0475"/>
<dbReference type="DNASU" id="2615269"/>
<dbReference type="EnsemblBacteria" id="AAF93648">
    <property type="protein sequence ID" value="AAF93648"/>
    <property type="gene ID" value="VC_0475"/>
</dbReference>
<dbReference type="KEGG" id="vch:VC_0475"/>
<dbReference type="PATRIC" id="fig|243277.26.peg.449"/>
<dbReference type="eggNOG" id="COG4771">
    <property type="taxonomic scope" value="Bacteria"/>
</dbReference>
<dbReference type="HOGENOM" id="CLU_008287_18_2_6"/>
<dbReference type="Proteomes" id="UP000000584">
    <property type="component" value="Chromosome 1"/>
</dbReference>
<dbReference type="GO" id="GO:0009279">
    <property type="term" value="C:cell outer membrane"/>
    <property type="evidence" value="ECO:0000318"/>
    <property type="project" value="GO_Central"/>
</dbReference>
<dbReference type="GO" id="GO:0015344">
    <property type="term" value="F:siderophore uptake transmembrane transporter activity"/>
    <property type="evidence" value="ECO:0000318"/>
    <property type="project" value="GO_Central"/>
</dbReference>
<dbReference type="GO" id="GO:0044718">
    <property type="term" value="P:siderophore transmembrane transport"/>
    <property type="evidence" value="ECO:0000318"/>
    <property type="project" value="GO_Central"/>
</dbReference>
<dbReference type="CDD" id="cd01347">
    <property type="entry name" value="ligand_gated_channel"/>
    <property type="match status" value="1"/>
</dbReference>
<dbReference type="FunFam" id="2.170.130.10:FF:000004">
    <property type="entry name" value="Colicin I TonB-dependent receptor"/>
    <property type="match status" value="1"/>
</dbReference>
<dbReference type="FunFam" id="2.40.170.20:FF:000016">
    <property type="entry name" value="Iron-regulated outer membrane virulence protein"/>
    <property type="match status" value="1"/>
</dbReference>
<dbReference type="Gene3D" id="2.40.170.20">
    <property type="entry name" value="TonB-dependent receptor, beta-barrel domain"/>
    <property type="match status" value="1"/>
</dbReference>
<dbReference type="Gene3D" id="2.170.130.10">
    <property type="entry name" value="TonB-dependent receptor, plug domain"/>
    <property type="match status" value="1"/>
</dbReference>
<dbReference type="InterPro" id="IPR012910">
    <property type="entry name" value="Plug_dom"/>
</dbReference>
<dbReference type="InterPro" id="IPR037066">
    <property type="entry name" value="Plug_dom_sf"/>
</dbReference>
<dbReference type="InterPro" id="IPR039426">
    <property type="entry name" value="TonB-dep_rcpt-like"/>
</dbReference>
<dbReference type="InterPro" id="IPR000531">
    <property type="entry name" value="TonB-dep_rcpt_b-brl"/>
</dbReference>
<dbReference type="InterPro" id="IPR010916">
    <property type="entry name" value="TonB_box_CS"/>
</dbReference>
<dbReference type="InterPro" id="IPR036942">
    <property type="entry name" value="TonB_rcpt_b-brl_sf"/>
</dbReference>
<dbReference type="InterPro" id="IPR010917">
    <property type="entry name" value="TonB_rcpt_CS"/>
</dbReference>
<dbReference type="NCBIfam" id="NF010010">
    <property type="entry name" value="PRK13483.1"/>
    <property type="match status" value="1"/>
</dbReference>
<dbReference type="PANTHER" id="PTHR30069:SF53">
    <property type="entry name" value="COLICIN I RECEPTOR-RELATED"/>
    <property type="match status" value="1"/>
</dbReference>
<dbReference type="PANTHER" id="PTHR30069">
    <property type="entry name" value="TONB-DEPENDENT OUTER MEMBRANE RECEPTOR"/>
    <property type="match status" value="1"/>
</dbReference>
<dbReference type="Pfam" id="PF07715">
    <property type="entry name" value="Plug"/>
    <property type="match status" value="1"/>
</dbReference>
<dbReference type="Pfam" id="PF00593">
    <property type="entry name" value="TonB_dep_Rec_b-barrel"/>
    <property type="match status" value="1"/>
</dbReference>
<dbReference type="SUPFAM" id="SSF56935">
    <property type="entry name" value="Porins"/>
    <property type="match status" value="1"/>
</dbReference>
<dbReference type="PROSITE" id="PS00430">
    <property type="entry name" value="TONB_DEPENDENT_REC_1"/>
    <property type="match status" value="1"/>
</dbReference>
<dbReference type="PROSITE" id="PS01156">
    <property type="entry name" value="TONB_DEPENDENT_REC_2"/>
    <property type="match status" value="1"/>
</dbReference>
<dbReference type="PROSITE" id="PS52016">
    <property type="entry name" value="TONB_DEPENDENT_REC_3"/>
    <property type="match status" value="1"/>
</dbReference>
<evidence type="ECO:0000250" key="1"/>
<evidence type="ECO:0000255" key="2"/>
<evidence type="ECO:0000255" key="3">
    <source>
        <dbReference type="PROSITE-ProRule" id="PRU01360"/>
    </source>
</evidence>
<evidence type="ECO:0000305" key="4"/>
<feature type="signal peptide" evidence="2">
    <location>
        <begin position="1"/>
        <end position="25"/>
    </location>
</feature>
<feature type="chain" id="PRO_0000034764" description="Iron-regulated outer membrane virulence protein">
    <location>
        <begin position="26"/>
        <end position="652"/>
    </location>
</feature>
<feature type="domain" description="TBDR plug" evidence="3">
    <location>
        <begin position="45"/>
        <end position="162"/>
    </location>
</feature>
<feature type="domain" description="TBDR beta-barrel" evidence="3">
    <location>
        <begin position="167"/>
        <end position="652"/>
    </location>
</feature>
<feature type="short sequence motif" description="TonB box">
    <location>
        <begin position="33"/>
        <end position="40"/>
    </location>
</feature>
<feature type="short sequence motif" description="TonB C-terminal box">
    <location>
        <begin position="635"/>
        <end position="652"/>
    </location>
</feature>
<accession>P0C6R0</accession>
<accession>P27772</accession>
<accession>Q9KUP0</accession>
<sequence length="652" mass="71669">MSRFNPSPVSLSVTLGLMFSASAFAQDATKTDETMVVTAAGYAQVIQNAPASISVISREDLESRYYRDVTDALKSVPGVTVTGGGDTTDISIRGMGSNYTLILVDGKRQTSRQTRPNSDGPGIEQGWLPPLQAIERIEVIRGPMSTLYGSDAIGGVINIITRKDQQQWSGNVQLSTVVQENRASGDEQSANFFVTGPLSDALSLQVYGQTTQRDEDEIEHGYGDKSLRSLTSKLNYQLNPDHQLQLEAGVSAQDRENNVGKSAQSSGCRGTCSNTDNQYRRNHVAVSHQGDWQDVGQSDTYLQYEENTNKSREMSIDNTVFKSTLVAPIGEHMLSFGVEGKHESLEDKTSNKISSRTHISNTQWAGFIEDEWALAEQFRLTFGGRLDHDKNYGSHFSPRVYGVWNLDPLWTVKGGVSTGFRAPQLREVTPDWGQVSGGGNIYGNPDLKPETSINKELSLMYSTGSGLAASLTAFHNDFKDKITRVACPANICTAGPNQWGAAPTYRVNIDEAETYGAEATLSLPITESVELSSSYTYTHSEQKSGNFAGRPLLQLPKHLFNANLSWQTTDRLNSWANLNYRGKEMQPEGGASNDDFIAPSYTFIDTGVTYALTDTATIKAAVYNLFDQEVNYAEYGYVEDGRRYWLGLDIAF</sequence>
<keyword id="KW-0998">Cell outer membrane</keyword>
<keyword id="KW-0406">Ion transport</keyword>
<keyword id="KW-0408">Iron</keyword>
<keyword id="KW-0410">Iron transport</keyword>
<keyword id="KW-0472">Membrane</keyword>
<keyword id="KW-0675">Receptor</keyword>
<keyword id="KW-1185">Reference proteome</keyword>
<keyword id="KW-0732">Signal</keyword>
<keyword id="KW-0798">TonB box</keyword>
<keyword id="KW-0812">Transmembrane</keyword>
<keyword id="KW-1134">Transmembrane beta strand</keyword>
<keyword id="KW-0813">Transport</keyword>
<keyword id="KW-0843">Virulence</keyword>